<protein>
    <recommendedName>
        <fullName evidence="2">Small ribosomal subunit protein uS5c</fullName>
    </recommendedName>
    <alternativeName>
        <fullName>30S ribosomal protein S5, chloroplastic</fullName>
    </alternativeName>
</protein>
<sequence length="176" mass="18733">MSSDLKKINKVKKNSRRISNTQEPKLVERLIKISRVSKVTKGGKKLSFRAIVVVGDENGKVGVGVAKADDVVNAFKKAKTDGRKNLIELPITKALSIPHNVAGNFGACKVIMRPSIEGSGVIAGGAVRIVLEVAGVKNVIAKQLGSNNLLNNARASVCALQNLTTKAQVAKKRNLD</sequence>
<accession>A0T0J5</accession>
<geneLocation type="chloroplast"/>
<feature type="chain" id="PRO_0000277027" description="Small ribosomal subunit protein uS5c">
    <location>
        <begin position="1"/>
        <end position="176"/>
    </location>
</feature>
<feature type="domain" description="S5 DRBM">
    <location>
        <begin position="26"/>
        <end position="89"/>
    </location>
</feature>
<proteinExistence type="inferred from homology"/>
<gene>
    <name type="primary">rps5</name>
</gene>
<name>RR5_PHATC</name>
<reference key="1">
    <citation type="journal article" date="2007" name="Mol. Genet. Genomics">
        <title>Chloroplast genomes of the diatoms Phaeodactylum tricornutum and Thalassiosira pseudonana: comparison with other plastid genomes of the red lineage.</title>
        <authorList>
            <person name="Oudot-Le Secq M.-P."/>
            <person name="Grimwood J."/>
            <person name="Shapiro H."/>
            <person name="Armbrust E.V."/>
            <person name="Bowler C."/>
            <person name="Green B.R."/>
        </authorList>
    </citation>
    <scope>NUCLEOTIDE SEQUENCE [LARGE SCALE GENOMIC DNA]</scope>
    <source>
        <strain>CCAP 1055/1</strain>
    </source>
</reference>
<keyword id="KW-0150">Chloroplast</keyword>
<keyword id="KW-0934">Plastid</keyword>
<keyword id="KW-1185">Reference proteome</keyword>
<keyword id="KW-0687">Ribonucleoprotein</keyword>
<keyword id="KW-0689">Ribosomal protein</keyword>
<keyword id="KW-0694">RNA-binding</keyword>
<keyword id="KW-0699">rRNA-binding</keyword>
<evidence type="ECO:0000250" key="1"/>
<evidence type="ECO:0000305" key="2"/>
<dbReference type="EMBL" id="EF067920">
    <property type="protein sequence ID" value="ABK20693.1"/>
    <property type="molecule type" value="Genomic_DNA"/>
</dbReference>
<dbReference type="RefSeq" id="YP_874470.1">
    <property type="nucleotide sequence ID" value="NC_008588.1"/>
</dbReference>
<dbReference type="SMR" id="A0T0J5"/>
<dbReference type="STRING" id="556484.A0T0J5"/>
<dbReference type="GeneID" id="4524645"/>
<dbReference type="InParanoid" id="A0T0J5"/>
<dbReference type="Proteomes" id="UP000000759">
    <property type="component" value="Chloroplast"/>
</dbReference>
<dbReference type="GO" id="GO:0009507">
    <property type="term" value="C:chloroplast"/>
    <property type="evidence" value="ECO:0007669"/>
    <property type="project" value="UniProtKB-SubCell"/>
</dbReference>
<dbReference type="GO" id="GO:0015935">
    <property type="term" value="C:small ribosomal subunit"/>
    <property type="evidence" value="ECO:0007669"/>
    <property type="project" value="InterPro"/>
</dbReference>
<dbReference type="GO" id="GO:0019843">
    <property type="term" value="F:rRNA binding"/>
    <property type="evidence" value="ECO:0007669"/>
    <property type="project" value="UniProtKB-UniRule"/>
</dbReference>
<dbReference type="GO" id="GO:0003735">
    <property type="term" value="F:structural constituent of ribosome"/>
    <property type="evidence" value="ECO:0007669"/>
    <property type="project" value="InterPro"/>
</dbReference>
<dbReference type="GO" id="GO:0006412">
    <property type="term" value="P:translation"/>
    <property type="evidence" value="ECO:0007669"/>
    <property type="project" value="UniProtKB-UniRule"/>
</dbReference>
<dbReference type="FunFam" id="3.30.230.10:FF:000002">
    <property type="entry name" value="30S ribosomal protein S5"/>
    <property type="match status" value="1"/>
</dbReference>
<dbReference type="Gene3D" id="3.30.160.20">
    <property type="match status" value="1"/>
</dbReference>
<dbReference type="Gene3D" id="3.30.230.10">
    <property type="match status" value="1"/>
</dbReference>
<dbReference type="HAMAP" id="MF_01307_B">
    <property type="entry name" value="Ribosomal_uS5_B"/>
    <property type="match status" value="1"/>
</dbReference>
<dbReference type="InterPro" id="IPR020568">
    <property type="entry name" value="Ribosomal_Su5_D2-typ_SF"/>
</dbReference>
<dbReference type="InterPro" id="IPR000851">
    <property type="entry name" value="Ribosomal_uS5"/>
</dbReference>
<dbReference type="InterPro" id="IPR005712">
    <property type="entry name" value="Ribosomal_uS5_bac-type"/>
</dbReference>
<dbReference type="InterPro" id="IPR005324">
    <property type="entry name" value="Ribosomal_uS5_C"/>
</dbReference>
<dbReference type="InterPro" id="IPR013810">
    <property type="entry name" value="Ribosomal_uS5_N"/>
</dbReference>
<dbReference type="InterPro" id="IPR018192">
    <property type="entry name" value="Ribosomal_uS5_N_CS"/>
</dbReference>
<dbReference type="InterPro" id="IPR014721">
    <property type="entry name" value="Ribsml_uS5_D2-typ_fold_subgr"/>
</dbReference>
<dbReference type="NCBIfam" id="TIGR01021">
    <property type="entry name" value="rpsE_bact"/>
    <property type="match status" value="1"/>
</dbReference>
<dbReference type="PANTHER" id="PTHR48277">
    <property type="entry name" value="MITOCHONDRIAL RIBOSOMAL PROTEIN S5"/>
    <property type="match status" value="1"/>
</dbReference>
<dbReference type="PANTHER" id="PTHR48277:SF1">
    <property type="entry name" value="MITOCHONDRIAL RIBOSOMAL PROTEIN S5"/>
    <property type="match status" value="1"/>
</dbReference>
<dbReference type="Pfam" id="PF00333">
    <property type="entry name" value="Ribosomal_S5"/>
    <property type="match status" value="1"/>
</dbReference>
<dbReference type="Pfam" id="PF03719">
    <property type="entry name" value="Ribosomal_S5_C"/>
    <property type="match status" value="1"/>
</dbReference>
<dbReference type="SUPFAM" id="SSF54768">
    <property type="entry name" value="dsRNA-binding domain-like"/>
    <property type="match status" value="1"/>
</dbReference>
<dbReference type="SUPFAM" id="SSF54211">
    <property type="entry name" value="Ribosomal protein S5 domain 2-like"/>
    <property type="match status" value="1"/>
</dbReference>
<dbReference type="PROSITE" id="PS00585">
    <property type="entry name" value="RIBOSOMAL_S5"/>
    <property type="match status" value="1"/>
</dbReference>
<dbReference type="PROSITE" id="PS50881">
    <property type="entry name" value="S5_DSRBD"/>
    <property type="match status" value="1"/>
</dbReference>
<organism>
    <name type="scientific">Phaeodactylum tricornutum (strain CCAP 1055/1)</name>
    <dbReference type="NCBI Taxonomy" id="556484"/>
    <lineage>
        <taxon>Eukaryota</taxon>
        <taxon>Sar</taxon>
        <taxon>Stramenopiles</taxon>
        <taxon>Ochrophyta</taxon>
        <taxon>Bacillariophyta</taxon>
        <taxon>Bacillariophyceae</taxon>
        <taxon>Bacillariophycidae</taxon>
        <taxon>Naviculales</taxon>
        <taxon>Phaeodactylaceae</taxon>
        <taxon>Phaeodactylum</taxon>
    </lineage>
</organism>
<comment type="function">
    <text evidence="1">With S4 and S12 plays an important role in translational accuracy.</text>
</comment>
<comment type="subunit">
    <text evidence="1">Part of the 30S ribosomal subunit. Contacts protein S4 (By similarity).</text>
</comment>
<comment type="subcellular location">
    <subcellularLocation>
        <location>Plastid</location>
        <location>Chloroplast</location>
    </subcellularLocation>
</comment>
<comment type="domain">
    <text>The N-terminal domain interacts with the head of the 30S subunit; the C-terminal domain interacts with the body and contacts protein S4. The interaction surface between S4 and S5 is involved in control of translational fidelity.</text>
</comment>
<comment type="similarity">
    <text evidence="2">Belongs to the universal ribosomal protein uS5 family.</text>
</comment>